<proteinExistence type="inferred from homology"/>
<protein>
    <recommendedName>
        <fullName evidence="1">Sulfite reductase [NADPH] hemoprotein beta-component 2</fullName>
        <shortName evidence="1">SiR-HP 2</shortName>
        <shortName evidence="1">SiRHP 2</shortName>
        <ecNumber evidence="1">1.8.1.2</ecNumber>
    </recommendedName>
</protein>
<evidence type="ECO:0000255" key="1">
    <source>
        <dbReference type="HAMAP-Rule" id="MF_01540"/>
    </source>
</evidence>
<feature type="chain" id="PRO_0000388489" description="Sulfite reductase [NADPH] hemoprotein beta-component 2">
    <location>
        <begin position="1"/>
        <end position="564"/>
    </location>
</feature>
<feature type="binding site" evidence="1">
    <location>
        <position position="426"/>
    </location>
    <ligand>
        <name>[4Fe-4S] cluster</name>
        <dbReference type="ChEBI" id="CHEBI:49883"/>
    </ligand>
</feature>
<feature type="binding site" evidence="1">
    <location>
        <position position="432"/>
    </location>
    <ligand>
        <name>[4Fe-4S] cluster</name>
        <dbReference type="ChEBI" id="CHEBI:49883"/>
    </ligand>
</feature>
<feature type="binding site" evidence="1">
    <location>
        <position position="471"/>
    </location>
    <ligand>
        <name>[4Fe-4S] cluster</name>
        <dbReference type="ChEBI" id="CHEBI:49883"/>
    </ligand>
</feature>
<feature type="binding site" evidence="1">
    <location>
        <position position="475"/>
    </location>
    <ligand>
        <name>[4Fe-4S] cluster</name>
        <dbReference type="ChEBI" id="CHEBI:49883"/>
    </ligand>
</feature>
<feature type="binding site" description="axial binding residue" evidence="1">
    <location>
        <position position="475"/>
    </location>
    <ligand>
        <name>siroheme</name>
        <dbReference type="ChEBI" id="CHEBI:60052"/>
    </ligand>
    <ligandPart>
        <name>Fe</name>
        <dbReference type="ChEBI" id="CHEBI:18248"/>
    </ligandPart>
</feature>
<accession>B5Y1B5</accession>
<reference key="1">
    <citation type="journal article" date="2008" name="PLoS Genet.">
        <title>Complete genome sequence of the N2-fixing broad host range endophyte Klebsiella pneumoniae 342 and virulence predictions verified in mice.</title>
        <authorList>
            <person name="Fouts D.E."/>
            <person name="Tyler H.L."/>
            <person name="DeBoy R.T."/>
            <person name="Daugherty S."/>
            <person name="Ren Q."/>
            <person name="Badger J.H."/>
            <person name="Durkin A.S."/>
            <person name="Huot H."/>
            <person name="Shrivastava S."/>
            <person name="Kothari S."/>
            <person name="Dodson R.J."/>
            <person name="Mohamoud Y."/>
            <person name="Khouri H."/>
            <person name="Roesch L.F.W."/>
            <person name="Krogfelt K.A."/>
            <person name="Struve C."/>
            <person name="Triplett E.W."/>
            <person name="Methe B.A."/>
        </authorList>
    </citation>
    <scope>NUCLEOTIDE SEQUENCE [LARGE SCALE GENOMIC DNA]</scope>
    <source>
        <strain>342</strain>
    </source>
</reference>
<gene>
    <name evidence="1" type="primary">cysI2</name>
    <name type="ordered locus">KPK_4457</name>
</gene>
<organism>
    <name type="scientific">Klebsiella pneumoniae (strain 342)</name>
    <dbReference type="NCBI Taxonomy" id="507522"/>
    <lineage>
        <taxon>Bacteria</taxon>
        <taxon>Pseudomonadati</taxon>
        <taxon>Pseudomonadota</taxon>
        <taxon>Gammaproteobacteria</taxon>
        <taxon>Enterobacterales</taxon>
        <taxon>Enterobacteriaceae</taxon>
        <taxon>Klebsiella/Raoultella group</taxon>
        <taxon>Klebsiella</taxon>
        <taxon>Klebsiella pneumoniae complex</taxon>
    </lineage>
</organism>
<dbReference type="EC" id="1.8.1.2" evidence="1"/>
<dbReference type="EMBL" id="CP000964">
    <property type="protein sequence ID" value="ACI10131.1"/>
    <property type="molecule type" value="Genomic_DNA"/>
</dbReference>
<dbReference type="SMR" id="B5Y1B5"/>
<dbReference type="KEGG" id="kpe:KPK_4457"/>
<dbReference type="HOGENOM" id="CLU_001975_3_2_6"/>
<dbReference type="UniPathway" id="UPA00140">
    <property type="reaction ID" value="UER00207"/>
</dbReference>
<dbReference type="Proteomes" id="UP000001734">
    <property type="component" value="Chromosome"/>
</dbReference>
<dbReference type="GO" id="GO:0009337">
    <property type="term" value="C:sulfite reductase complex (NADPH)"/>
    <property type="evidence" value="ECO:0007669"/>
    <property type="project" value="InterPro"/>
</dbReference>
<dbReference type="GO" id="GO:0051539">
    <property type="term" value="F:4 iron, 4 sulfur cluster binding"/>
    <property type="evidence" value="ECO:0007669"/>
    <property type="project" value="UniProtKB-KW"/>
</dbReference>
<dbReference type="GO" id="GO:0020037">
    <property type="term" value="F:heme binding"/>
    <property type="evidence" value="ECO:0007669"/>
    <property type="project" value="InterPro"/>
</dbReference>
<dbReference type="GO" id="GO:0046872">
    <property type="term" value="F:metal ion binding"/>
    <property type="evidence" value="ECO:0007669"/>
    <property type="project" value="UniProtKB-KW"/>
</dbReference>
<dbReference type="GO" id="GO:0050661">
    <property type="term" value="F:NADP binding"/>
    <property type="evidence" value="ECO:0007669"/>
    <property type="project" value="InterPro"/>
</dbReference>
<dbReference type="GO" id="GO:0050311">
    <property type="term" value="F:sulfite reductase (ferredoxin) activity"/>
    <property type="evidence" value="ECO:0007669"/>
    <property type="project" value="TreeGrafter"/>
</dbReference>
<dbReference type="GO" id="GO:0004783">
    <property type="term" value="F:sulfite reductase (NADPH) activity"/>
    <property type="evidence" value="ECO:0007669"/>
    <property type="project" value="UniProtKB-UniRule"/>
</dbReference>
<dbReference type="GO" id="GO:0019344">
    <property type="term" value="P:cysteine biosynthetic process"/>
    <property type="evidence" value="ECO:0007669"/>
    <property type="project" value="UniProtKB-KW"/>
</dbReference>
<dbReference type="GO" id="GO:0070814">
    <property type="term" value="P:hydrogen sulfide biosynthetic process"/>
    <property type="evidence" value="ECO:0007669"/>
    <property type="project" value="UniProtKB-UniRule"/>
</dbReference>
<dbReference type="GO" id="GO:0000103">
    <property type="term" value="P:sulfate assimilation"/>
    <property type="evidence" value="ECO:0007669"/>
    <property type="project" value="UniProtKB-UniRule"/>
</dbReference>
<dbReference type="FunFam" id="3.30.413.10:FF:000003">
    <property type="entry name" value="Sulfite reductase [NADPH] hemoprotein beta-component"/>
    <property type="match status" value="1"/>
</dbReference>
<dbReference type="FunFam" id="3.30.413.10:FF:000004">
    <property type="entry name" value="Sulfite reductase [NADPH] hemoprotein beta-component"/>
    <property type="match status" value="1"/>
</dbReference>
<dbReference type="Gene3D" id="3.30.413.10">
    <property type="entry name" value="Sulfite Reductase Hemoprotein, domain 1"/>
    <property type="match status" value="2"/>
</dbReference>
<dbReference type="HAMAP" id="MF_01540">
    <property type="entry name" value="CysI"/>
    <property type="match status" value="1"/>
</dbReference>
<dbReference type="InterPro" id="IPR011786">
    <property type="entry name" value="CysI"/>
</dbReference>
<dbReference type="InterPro" id="IPR005117">
    <property type="entry name" value="NiRdtase/SiRdtase_haem-b_fer"/>
</dbReference>
<dbReference type="InterPro" id="IPR036136">
    <property type="entry name" value="Nit/Sulf_reduc_fer-like_dom_sf"/>
</dbReference>
<dbReference type="InterPro" id="IPR006067">
    <property type="entry name" value="NO2/SO3_Rdtase_4Fe4S_dom"/>
</dbReference>
<dbReference type="InterPro" id="IPR045169">
    <property type="entry name" value="NO2/SO3_Rdtase_4Fe4S_prot"/>
</dbReference>
<dbReference type="InterPro" id="IPR045854">
    <property type="entry name" value="NO2/SO3_Rdtase_4Fe4S_sf"/>
</dbReference>
<dbReference type="InterPro" id="IPR006066">
    <property type="entry name" value="NO2/SO3_Rdtase_FeS/sirohaem_BS"/>
</dbReference>
<dbReference type="NCBIfam" id="TIGR02041">
    <property type="entry name" value="CysI"/>
    <property type="match status" value="1"/>
</dbReference>
<dbReference type="NCBIfam" id="NF010029">
    <property type="entry name" value="PRK13504.1"/>
    <property type="match status" value="1"/>
</dbReference>
<dbReference type="PANTHER" id="PTHR11493:SF47">
    <property type="entry name" value="SULFITE REDUCTASE [NADPH] SUBUNIT BETA"/>
    <property type="match status" value="1"/>
</dbReference>
<dbReference type="PANTHER" id="PTHR11493">
    <property type="entry name" value="SULFITE REDUCTASE [NADPH] SUBUNIT BETA-RELATED"/>
    <property type="match status" value="1"/>
</dbReference>
<dbReference type="Pfam" id="PF01077">
    <property type="entry name" value="NIR_SIR"/>
    <property type="match status" value="1"/>
</dbReference>
<dbReference type="Pfam" id="PF03460">
    <property type="entry name" value="NIR_SIR_ferr"/>
    <property type="match status" value="2"/>
</dbReference>
<dbReference type="PRINTS" id="PR00397">
    <property type="entry name" value="SIROHAEM"/>
</dbReference>
<dbReference type="SUPFAM" id="SSF56014">
    <property type="entry name" value="Nitrite and sulphite reductase 4Fe-4S domain-like"/>
    <property type="match status" value="2"/>
</dbReference>
<dbReference type="SUPFAM" id="SSF55124">
    <property type="entry name" value="Nitrite/Sulfite reductase N-terminal domain-like"/>
    <property type="match status" value="2"/>
</dbReference>
<dbReference type="PROSITE" id="PS00365">
    <property type="entry name" value="NIR_SIR"/>
    <property type="match status" value="1"/>
</dbReference>
<comment type="function">
    <text evidence="1">Component of the sulfite reductase complex that catalyzes the 6-electron reduction of sulfite to sulfide. This is one of several activities required for the biosynthesis of L-cysteine from sulfate.</text>
</comment>
<comment type="catalytic activity">
    <reaction evidence="1">
        <text>hydrogen sulfide + 3 NADP(+) + 3 H2O = sulfite + 3 NADPH + 4 H(+)</text>
        <dbReference type="Rhea" id="RHEA:13801"/>
        <dbReference type="ChEBI" id="CHEBI:15377"/>
        <dbReference type="ChEBI" id="CHEBI:15378"/>
        <dbReference type="ChEBI" id="CHEBI:17359"/>
        <dbReference type="ChEBI" id="CHEBI:29919"/>
        <dbReference type="ChEBI" id="CHEBI:57783"/>
        <dbReference type="ChEBI" id="CHEBI:58349"/>
        <dbReference type="EC" id="1.8.1.2"/>
    </reaction>
</comment>
<comment type="cofactor">
    <cofactor evidence="1">
        <name>siroheme</name>
        <dbReference type="ChEBI" id="CHEBI:60052"/>
    </cofactor>
    <text evidence="1">Binds 1 siroheme per subunit.</text>
</comment>
<comment type="cofactor">
    <cofactor evidence="1">
        <name>[4Fe-4S] cluster</name>
        <dbReference type="ChEBI" id="CHEBI:49883"/>
    </cofactor>
    <text evidence="1">Binds 1 [4Fe-4S] cluster per subunit.</text>
</comment>
<comment type="pathway">
    <text evidence="1">Sulfur metabolism; hydrogen sulfide biosynthesis; hydrogen sulfide from sulfite (NADPH route): step 1/1.</text>
</comment>
<comment type="subunit">
    <text evidence="1">Alpha(8)-beta(8). The alpha component is a flavoprotein, the beta component is a hemoprotein.</text>
</comment>
<comment type="similarity">
    <text evidence="1">Belongs to the nitrite and sulfite reductase 4Fe-4S domain family.</text>
</comment>
<keyword id="KW-0004">4Fe-4S</keyword>
<keyword id="KW-0028">Amino-acid biosynthesis</keyword>
<keyword id="KW-0198">Cysteine biosynthesis</keyword>
<keyword id="KW-0349">Heme</keyword>
<keyword id="KW-0408">Iron</keyword>
<keyword id="KW-0411">Iron-sulfur</keyword>
<keyword id="KW-0479">Metal-binding</keyword>
<keyword id="KW-0521">NADP</keyword>
<keyword id="KW-0560">Oxidoreductase</keyword>
<sequence length="564" mass="62697">MSNDEFSDNERLKQQSQLLRGTIKEDLHNELTGGFLGDNFQLIRFHGMYQQDDRDIRQERAAQMLEPLHTVMLRVRLPGGIISPQQWLGIDEFASQHTLYGSIRITNRQALQLHGVLKRNIKPVHRLLHQLGLDSRATAGDVNRNVLCTSNPVESRLHHQAYEWAKKISEHLLPKTNAYAEVWLDGEKIAQPEEEPILGNNYLPRKFKTAVVIPPQNDVDLHANDLNFIAIGDNGQLTGFNVLVGGGLAMTHGDQSTYPRLATELGYIPLNATLAVATAVVATQRDLGNRANRRNAKTKYTIDRLGIEVFKAEVELRAGLAFQPLRPYAFSSRGDRIGWVEGIDGKHHLTLFIPSGRLIDKPGKPLKSGLAAIAAVHTGDFRLTPNQNIIIAGVSERNRAQIDALAQRYSLIDDTVSPQRKSAMACVSYPTCPLAMAEAERVLPDIVDRLDAILIRNGIADRDVIFRVTGCPNGCGRAMLAEIGLVGRAVGRYDIYLGGNREGTRIPRLYKENQPLEEIIRDLDALLSAWAQADNPDEAFGDFAIQTGIIRPVLNSSIDFYLQD</sequence>
<name>CYSI2_KLEP3</name>